<organism>
    <name type="scientific">Mus musculus</name>
    <name type="common">Mouse</name>
    <dbReference type="NCBI Taxonomy" id="10090"/>
    <lineage>
        <taxon>Eukaryota</taxon>
        <taxon>Metazoa</taxon>
        <taxon>Chordata</taxon>
        <taxon>Craniata</taxon>
        <taxon>Vertebrata</taxon>
        <taxon>Euteleostomi</taxon>
        <taxon>Mammalia</taxon>
        <taxon>Eutheria</taxon>
        <taxon>Euarchontoglires</taxon>
        <taxon>Glires</taxon>
        <taxon>Rodentia</taxon>
        <taxon>Myomorpha</taxon>
        <taxon>Muroidea</taxon>
        <taxon>Muridae</taxon>
        <taxon>Murinae</taxon>
        <taxon>Mus</taxon>
        <taxon>Mus</taxon>
    </lineage>
</organism>
<protein>
    <recommendedName>
        <fullName evidence="36">Cell adhesion molecule CEACAM1</fullName>
    </recommendedName>
    <alternativeName>
        <fullName evidence="1">Biliary glycoprotein 1</fullName>
        <shortName evidence="1">BGP-1</shortName>
    </alternativeName>
    <alternativeName>
        <fullName>Biliary glycoprotein D</fullName>
    </alternativeName>
    <alternativeName>
        <fullName evidence="1">Carcinoembryonic antigen-related cell adhesion molecule 1</fullName>
        <shortName evidence="38">CEA cell adhesion molecule 1</shortName>
    </alternativeName>
    <alternativeName>
        <fullName>MHVR1</fullName>
    </alternativeName>
    <alternativeName>
        <fullName>Murine hepatitis virus receptor</fullName>
        <shortName>MHV-R</shortName>
    </alternativeName>
    <cdAntigenName>CD66a</cdAntigenName>
</protein>
<dbReference type="EMBL" id="M77196">
    <property type="protein sequence ID" value="AAA37858.1"/>
    <property type="molecule type" value="mRNA"/>
</dbReference>
<dbReference type="EMBL" id="X15351">
    <property type="protein sequence ID" value="CAA33409.1"/>
    <property type="molecule type" value="mRNA"/>
</dbReference>
<dbReference type="EMBL" id="X67278">
    <property type="protein sequence ID" value="CAA47695.1"/>
    <property type="molecule type" value="mRNA"/>
</dbReference>
<dbReference type="EMBL" id="X67279">
    <property type="protein sequence ID" value="CAA47696.1"/>
    <property type="molecule type" value="mRNA"/>
</dbReference>
<dbReference type="EMBL" id="X67282">
    <property type="protein sequence ID" value="CAA47699.1"/>
    <property type="molecule type" value="mRNA"/>
</dbReference>
<dbReference type="CCDS" id="CCDS20984.1">
    <molecule id="P31809-1"/>
</dbReference>
<dbReference type="CCDS" id="CCDS20985.1">
    <molecule id="P31809-3"/>
</dbReference>
<dbReference type="CCDS" id="CCDS39839.1">
    <molecule id="P31809-2"/>
</dbReference>
<dbReference type="CCDS" id="CCDS85244.1">
    <molecule id="P31809-4"/>
</dbReference>
<dbReference type="PIR" id="JC1505">
    <property type="entry name" value="WMMSR1"/>
</dbReference>
<dbReference type="PIR" id="JC1508">
    <property type="entry name" value="JC1508"/>
</dbReference>
<dbReference type="PIR" id="JC1511">
    <property type="entry name" value="JC1511"/>
</dbReference>
<dbReference type="RefSeq" id="NP_001034274.1">
    <property type="nucleotide sequence ID" value="NM_001039185.1"/>
</dbReference>
<dbReference type="RefSeq" id="NP_001034275.1">
    <molecule id="P31809-2"/>
    <property type="nucleotide sequence ID" value="NM_001039186.1"/>
</dbReference>
<dbReference type="RefSeq" id="NP_001034276.1">
    <molecule id="P31809-4"/>
    <property type="nucleotide sequence ID" value="NM_001039187.1"/>
</dbReference>
<dbReference type="PDB" id="1L6Z">
    <property type="method" value="X-ray"/>
    <property type="resolution" value="3.32 A"/>
    <property type="chains" value="A=35-416"/>
</dbReference>
<dbReference type="PDB" id="3R4D">
    <property type="method" value="X-ray"/>
    <property type="resolution" value="3.10 A"/>
    <property type="chains" value="A/C=35-416"/>
</dbReference>
<dbReference type="PDB" id="5VST">
    <property type="method" value="X-ray"/>
    <property type="resolution" value="3.10 A"/>
    <property type="chains" value="A=35-416"/>
</dbReference>
<dbReference type="PDB" id="6VSJ">
    <property type="method" value="EM"/>
    <property type="resolution" value="3.94 A"/>
    <property type="chains" value="D/E/F=35-416"/>
</dbReference>
<dbReference type="PDBsum" id="1L6Z"/>
<dbReference type="PDBsum" id="3R4D"/>
<dbReference type="PDBsum" id="5VST"/>
<dbReference type="PDBsum" id="6VSJ"/>
<dbReference type="EMDB" id="EMD-21377"/>
<dbReference type="SMR" id="P31809"/>
<dbReference type="BioGRID" id="204925">
    <property type="interactions" value="1"/>
</dbReference>
<dbReference type="CORUM" id="P31809"/>
<dbReference type="DIP" id="DIP-61461N"/>
<dbReference type="FunCoup" id="P31809">
    <property type="interactions" value="108"/>
</dbReference>
<dbReference type="IntAct" id="P31809">
    <property type="interactions" value="3"/>
</dbReference>
<dbReference type="MINT" id="P31809"/>
<dbReference type="STRING" id="10090.ENSMUSP00000096266"/>
<dbReference type="GlyCosmos" id="P31809">
    <property type="glycosylation" value="16 sites, No reported glycans"/>
</dbReference>
<dbReference type="GlyGen" id="P31809">
    <property type="glycosylation" value="18 sites, 6 N-linked glycans (6 sites), 1 O-linked glycan (1 site)"/>
</dbReference>
<dbReference type="iPTMnet" id="P31809"/>
<dbReference type="PhosphoSitePlus" id="P31809"/>
<dbReference type="jPOST" id="P31809"/>
<dbReference type="PaxDb" id="10090-ENSMUSP00000096266"/>
<dbReference type="PeptideAtlas" id="P31809"/>
<dbReference type="ProteomicsDB" id="281454">
    <molecule id="P31809-1"/>
</dbReference>
<dbReference type="ProteomicsDB" id="281455">
    <molecule id="P31809-2"/>
</dbReference>
<dbReference type="ProteomicsDB" id="281456">
    <molecule id="P31809-3"/>
</dbReference>
<dbReference type="ProteomicsDB" id="281457">
    <molecule id="P31809-4"/>
</dbReference>
<dbReference type="DNASU" id="26365"/>
<dbReference type="Ensembl" id="ENSMUST00000098666.9">
    <molecule id="P31809-2"/>
    <property type="protein sequence ID" value="ENSMUSP00000096263.3"/>
    <property type="gene ID" value="ENSMUSG00000074272.11"/>
</dbReference>
<dbReference type="Ensembl" id="ENSMUST00000206171.2">
    <molecule id="P31809-2"/>
    <property type="protein sequence ID" value="ENSMUSP00000145584.2"/>
    <property type="gene ID" value="ENSMUSG00000074272.11"/>
</dbReference>
<dbReference type="Ensembl" id="ENSMUST00000206687.2">
    <molecule id="P31809-4"/>
    <property type="protein sequence ID" value="ENSMUSP00000146066.2"/>
    <property type="gene ID" value="ENSMUSG00000074272.11"/>
</dbReference>
<dbReference type="GeneID" id="26365"/>
<dbReference type="KEGG" id="mmu:26365"/>
<dbReference type="UCSC" id="uc009fsv.1">
    <molecule id="P31809-2"/>
    <property type="organism name" value="mouse"/>
</dbReference>
<dbReference type="UCSC" id="uc009fta.1">
    <molecule id="P31809-1"/>
    <property type="organism name" value="mouse"/>
</dbReference>
<dbReference type="AGR" id="MGI:1347245"/>
<dbReference type="CTD" id="634"/>
<dbReference type="MGI" id="MGI:1347245">
    <property type="gene designation" value="Ceacam1"/>
</dbReference>
<dbReference type="VEuPathDB" id="HostDB:ENSMUSG00000074272"/>
<dbReference type="eggNOG" id="ENOG502RXPD">
    <property type="taxonomic scope" value="Eukaryota"/>
</dbReference>
<dbReference type="GeneTree" id="ENSGT01100000263479"/>
<dbReference type="InParanoid" id="P31809"/>
<dbReference type="OrthoDB" id="6159398at2759"/>
<dbReference type="PhylomeDB" id="P31809"/>
<dbReference type="Reactome" id="R-MMU-1566977">
    <property type="pathway name" value="Fibronectin matrix formation"/>
</dbReference>
<dbReference type="Reactome" id="R-MMU-163125">
    <property type="pathway name" value="Post-translational modification: synthesis of GPI-anchored proteins"/>
</dbReference>
<dbReference type="Reactome" id="R-MMU-202733">
    <property type="pathway name" value="Cell surface interactions at the vascular wall"/>
</dbReference>
<dbReference type="Reactome" id="R-MMU-6798695">
    <property type="pathway name" value="Neutrophil degranulation"/>
</dbReference>
<dbReference type="BioGRID-ORCS" id="26365">
    <property type="hits" value="2 hits in 81 CRISPR screens"/>
</dbReference>
<dbReference type="ChiTaRS" id="Ceacam1">
    <property type="organism name" value="mouse"/>
</dbReference>
<dbReference type="EvolutionaryTrace" id="P31809"/>
<dbReference type="PRO" id="PR:P31809"/>
<dbReference type="Proteomes" id="UP000000589">
    <property type="component" value="Chromosome 7"/>
</dbReference>
<dbReference type="RNAct" id="P31809">
    <property type="molecule type" value="protein"/>
</dbReference>
<dbReference type="Bgee" id="ENSMUSG00000074272">
    <property type="expression patterns" value="Expressed in prostate gland ventral lobe and 175 other cell types or tissues"/>
</dbReference>
<dbReference type="ExpressionAtlas" id="P31809">
    <property type="expression patterns" value="baseline and differential"/>
</dbReference>
<dbReference type="GO" id="GO:0005912">
    <property type="term" value="C:adherens junction"/>
    <property type="evidence" value="ECO:0000250"/>
    <property type="project" value="UniProtKB"/>
</dbReference>
<dbReference type="GO" id="GO:0016324">
    <property type="term" value="C:apical plasma membrane"/>
    <property type="evidence" value="ECO:0000250"/>
    <property type="project" value="UniProtKB"/>
</dbReference>
<dbReference type="GO" id="GO:0009925">
    <property type="term" value="C:basal plasma membrane"/>
    <property type="evidence" value="ECO:0000250"/>
    <property type="project" value="UniProtKB"/>
</dbReference>
<dbReference type="GO" id="GO:0030054">
    <property type="term" value="C:cell junction"/>
    <property type="evidence" value="ECO:0000250"/>
    <property type="project" value="UniProtKB"/>
</dbReference>
<dbReference type="GO" id="GO:0009986">
    <property type="term" value="C:cell surface"/>
    <property type="evidence" value="ECO:0000314"/>
    <property type="project" value="UniProtKB"/>
</dbReference>
<dbReference type="GO" id="GO:0005911">
    <property type="term" value="C:cell-cell junction"/>
    <property type="evidence" value="ECO:0000250"/>
    <property type="project" value="UniProtKB"/>
</dbReference>
<dbReference type="GO" id="GO:0060170">
    <property type="term" value="C:ciliary membrane"/>
    <property type="evidence" value="ECO:0000314"/>
    <property type="project" value="MGI"/>
</dbReference>
<dbReference type="GO" id="GO:0009897">
    <property type="term" value="C:external side of plasma membrane"/>
    <property type="evidence" value="ECO:0000314"/>
    <property type="project" value="MGI"/>
</dbReference>
<dbReference type="GO" id="GO:0016328">
    <property type="term" value="C:lateral plasma membrane"/>
    <property type="evidence" value="ECO:0000250"/>
    <property type="project" value="UniProtKB"/>
</dbReference>
<dbReference type="GO" id="GO:0016020">
    <property type="term" value="C:membrane"/>
    <property type="evidence" value="ECO:0000266"/>
    <property type="project" value="MGI"/>
</dbReference>
<dbReference type="GO" id="GO:0031528">
    <property type="term" value="C:microvillus membrane"/>
    <property type="evidence" value="ECO:0007669"/>
    <property type="project" value="UniProtKB-SubCell"/>
</dbReference>
<dbReference type="GO" id="GO:0005886">
    <property type="term" value="C:plasma membrane"/>
    <property type="evidence" value="ECO:0000314"/>
    <property type="project" value="MGI"/>
</dbReference>
<dbReference type="GO" id="GO:0030133">
    <property type="term" value="C:transport vesicle"/>
    <property type="evidence" value="ECO:0007669"/>
    <property type="project" value="UniProtKB-SubCell"/>
</dbReference>
<dbReference type="GO" id="GO:0015125">
    <property type="term" value="F:bile acid transmembrane transporter activity"/>
    <property type="evidence" value="ECO:0000250"/>
    <property type="project" value="UniProtKB"/>
</dbReference>
<dbReference type="GO" id="GO:0005516">
    <property type="term" value="F:calmodulin binding"/>
    <property type="evidence" value="ECO:0000250"/>
    <property type="project" value="UniProtKB"/>
</dbReference>
<dbReference type="GO" id="GO:0005130">
    <property type="term" value="F:granulocyte colony-stimulating factor receptor binding"/>
    <property type="evidence" value="ECO:0000353"/>
    <property type="project" value="UniProtKB"/>
</dbReference>
<dbReference type="GO" id="GO:0042802">
    <property type="term" value="F:identical protein binding"/>
    <property type="evidence" value="ECO:0000250"/>
    <property type="project" value="UniProtKB"/>
</dbReference>
<dbReference type="GO" id="GO:0046983">
    <property type="term" value="F:protein dimerization activity"/>
    <property type="evidence" value="ECO:0000250"/>
    <property type="project" value="UniProtKB"/>
</dbReference>
<dbReference type="GO" id="GO:0042803">
    <property type="term" value="F:protein homodimerization activity"/>
    <property type="evidence" value="ECO:0000250"/>
    <property type="project" value="UniProtKB"/>
</dbReference>
<dbReference type="GO" id="GO:1990782">
    <property type="term" value="F:protein tyrosine kinase binding"/>
    <property type="evidence" value="ECO:0000353"/>
    <property type="project" value="UniProtKB"/>
</dbReference>
<dbReference type="GO" id="GO:0035325">
    <property type="term" value="F:Toll-like receptor binding"/>
    <property type="evidence" value="ECO:0000353"/>
    <property type="project" value="UniProtKB"/>
</dbReference>
<dbReference type="GO" id="GO:0046790">
    <property type="term" value="F:virion binding"/>
    <property type="evidence" value="ECO:0000314"/>
    <property type="project" value="MGI"/>
</dbReference>
<dbReference type="GO" id="GO:0001618">
    <property type="term" value="F:virus receptor activity"/>
    <property type="evidence" value="ECO:0000314"/>
    <property type="project" value="MGI"/>
</dbReference>
<dbReference type="GO" id="GO:0015721">
    <property type="term" value="P:bile acid and bile salt transport"/>
    <property type="evidence" value="ECO:0000250"/>
    <property type="project" value="UniProtKB"/>
</dbReference>
<dbReference type="GO" id="GO:0001568">
    <property type="term" value="P:blood vessel development"/>
    <property type="evidence" value="ECO:0000315"/>
    <property type="project" value="UniProtKB"/>
</dbReference>
<dbReference type="GO" id="GO:0016338">
    <property type="term" value="P:calcium-independent cell-cell adhesion via plasma membrane cell-adhesion molecules"/>
    <property type="evidence" value="ECO:0000314"/>
    <property type="project" value="MGI"/>
</dbReference>
<dbReference type="GO" id="GO:0035710">
    <property type="term" value="P:CD4-positive, alpha-beta T cell activation"/>
    <property type="evidence" value="ECO:0000315"/>
    <property type="project" value="MGI"/>
</dbReference>
<dbReference type="GO" id="GO:0036037">
    <property type="term" value="P:CD8-positive, alpha-beta T cell activation"/>
    <property type="evidence" value="ECO:0000315"/>
    <property type="project" value="MGI"/>
</dbReference>
<dbReference type="GO" id="GO:0045216">
    <property type="term" value="P:cell-cell junction organization"/>
    <property type="evidence" value="ECO:0000315"/>
    <property type="project" value="UniProtKB"/>
</dbReference>
<dbReference type="GO" id="GO:0032869">
    <property type="term" value="P:cellular response to insulin stimulus"/>
    <property type="evidence" value="ECO:0000250"/>
    <property type="project" value="UniProtKB"/>
</dbReference>
<dbReference type="GO" id="GO:0035726">
    <property type="term" value="P:common myeloid progenitor cell proliferation"/>
    <property type="evidence" value="ECO:0000315"/>
    <property type="project" value="UniProtKB"/>
</dbReference>
<dbReference type="GO" id="GO:0038158">
    <property type="term" value="P:granulocyte colony-stimulating factor signaling pathway"/>
    <property type="evidence" value="ECO:0000315"/>
    <property type="project" value="UniProtKB"/>
</dbReference>
<dbReference type="GO" id="GO:0007156">
    <property type="term" value="P:homophilic cell adhesion via plasma membrane adhesion molecules"/>
    <property type="evidence" value="ECO:0000314"/>
    <property type="project" value="MGI"/>
</dbReference>
<dbReference type="GO" id="GO:1901143">
    <property type="term" value="P:insulin catabolic process"/>
    <property type="evidence" value="ECO:0000315"/>
    <property type="project" value="UniProtKB"/>
</dbReference>
<dbReference type="GO" id="GO:0038016">
    <property type="term" value="P:insulin receptor internalization"/>
    <property type="evidence" value="ECO:0000250"/>
    <property type="project" value="UniProtKB"/>
</dbReference>
<dbReference type="GO" id="GO:0045779">
    <property type="term" value="P:negative regulation of bone resorption"/>
    <property type="evidence" value="ECO:0000315"/>
    <property type="project" value="MGI"/>
</dbReference>
<dbReference type="GO" id="GO:0001818">
    <property type="term" value="P:negative regulation of cytokine production"/>
    <property type="evidence" value="ECO:0000315"/>
    <property type="project" value="MGI"/>
</dbReference>
<dbReference type="GO" id="GO:0043318">
    <property type="term" value="P:negative regulation of cytotoxic T cell degranulation"/>
    <property type="evidence" value="ECO:0000250"/>
    <property type="project" value="UniProtKB"/>
</dbReference>
<dbReference type="GO" id="GO:0045717">
    <property type="term" value="P:negative regulation of fatty acid biosynthetic process"/>
    <property type="evidence" value="ECO:0000250"/>
    <property type="project" value="UniProtKB"/>
</dbReference>
<dbReference type="GO" id="GO:0030853">
    <property type="term" value="P:negative regulation of granulocyte differentiation"/>
    <property type="evidence" value="ECO:0000315"/>
    <property type="project" value="UniProtKB"/>
</dbReference>
<dbReference type="GO" id="GO:2000346">
    <property type="term" value="P:negative regulation of hepatocyte proliferation"/>
    <property type="evidence" value="ECO:0000315"/>
    <property type="project" value="UniProtKB"/>
</dbReference>
<dbReference type="GO" id="GO:0032692">
    <property type="term" value="P:negative regulation of interleukin-1 production"/>
    <property type="evidence" value="ECO:0000315"/>
    <property type="project" value="UniProtKB"/>
</dbReference>
<dbReference type="GO" id="GO:0032703">
    <property type="term" value="P:negative regulation of interleukin-2 production"/>
    <property type="evidence" value="ECO:0000315"/>
    <property type="project" value="MGI"/>
</dbReference>
<dbReference type="GO" id="GO:0046329">
    <property type="term" value="P:negative regulation of JNK cascade"/>
    <property type="evidence" value="ECO:0000315"/>
    <property type="project" value="MGI"/>
</dbReference>
<dbReference type="GO" id="GO:0051055">
    <property type="term" value="P:negative regulation of lipid biosynthetic process"/>
    <property type="evidence" value="ECO:0000315"/>
    <property type="project" value="UniProtKB"/>
</dbReference>
<dbReference type="GO" id="GO:0002859">
    <property type="term" value="P:negative regulation of natural killer cell mediated cytotoxicity directed against tumor cell target"/>
    <property type="evidence" value="ECO:0000315"/>
    <property type="project" value="UniProtKB"/>
</dbReference>
<dbReference type="GO" id="GO:0045671">
    <property type="term" value="P:negative regulation of osteoclast differentiation"/>
    <property type="evidence" value="ECO:0000315"/>
    <property type="project" value="MGI"/>
</dbReference>
<dbReference type="GO" id="GO:0090331">
    <property type="term" value="P:negative regulation of platelet aggregation"/>
    <property type="evidence" value="ECO:0000315"/>
    <property type="project" value="UniProtKB"/>
</dbReference>
<dbReference type="GO" id="GO:0006469">
    <property type="term" value="P:negative regulation of protein kinase activity"/>
    <property type="evidence" value="ECO:0000315"/>
    <property type="project" value="UniProtKB"/>
</dbReference>
<dbReference type="GO" id="GO:0001915">
    <property type="term" value="P:negative regulation of T cell mediated cytotoxicity"/>
    <property type="evidence" value="ECO:0000250"/>
    <property type="project" value="UniProtKB"/>
</dbReference>
<dbReference type="GO" id="GO:0042130">
    <property type="term" value="P:negative regulation of T cell proliferation"/>
    <property type="evidence" value="ECO:0000315"/>
    <property type="project" value="MGI"/>
</dbReference>
<dbReference type="GO" id="GO:0050860">
    <property type="term" value="P:negative regulation of T cell receptor signaling pathway"/>
    <property type="evidence" value="ECO:0000250"/>
    <property type="project" value="UniProtKB"/>
</dbReference>
<dbReference type="GO" id="GO:0043116">
    <property type="term" value="P:negative regulation of vascular permeability"/>
    <property type="evidence" value="ECO:0000315"/>
    <property type="project" value="UniProtKB"/>
</dbReference>
<dbReference type="GO" id="GO:0048541">
    <property type="term" value="P:Peyer's patch development"/>
    <property type="evidence" value="ECO:0000315"/>
    <property type="project" value="MGI"/>
</dbReference>
<dbReference type="GO" id="GO:0070237">
    <property type="term" value="P:positive regulation of activation-induced cell death of T cells"/>
    <property type="evidence" value="ECO:0000315"/>
    <property type="project" value="MGI"/>
</dbReference>
<dbReference type="GO" id="GO:0070886">
    <property type="term" value="P:positive regulation of calcineurin-NFAT signaling cascade"/>
    <property type="evidence" value="ECO:0000315"/>
    <property type="project" value="MGI"/>
</dbReference>
<dbReference type="GO" id="GO:2000516">
    <property type="term" value="P:positive regulation of CD4-positive, alpha-beta T cell activation"/>
    <property type="evidence" value="ECO:0000315"/>
    <property type="project" value="MGI"/>
</dbReference>
<dbReference type="GO" id="GO:2000563">
    <property type="term" value="P:positive regulation of CD4-positive, alpha-beta T cell proliferation"/>
    <property type="evidence" value="ECO:0000315"/>
    <property type="project" value="MGI"/>
</dbReference>
<dbReference type="GO" id="GO:2001187">
    <property type="term" value="P:positive regulation of CD8-positive, alpha-beta T cell activation"/>
    <property type="evidence" value="ECO:0000315"/>
    <property type="project" value="MGI"/>
</dbReference>
<dbReference type="GO" id="GO:0002639">
    <property type="term" value="P:positive regulation of immunoglobulin production"/>
    <property type="evidence" value="ECO:0000315"/>
    <property type="project" value="MGI"/>
</dbReference>
<dbReference type="GO" id="GO:0046330">
    <property type="term" value="P:positive regulation of JNK cascade"/>
    <property type="evidence" value="ECO:0000314"/>
    <property type="project" value="MGI"/>
</dbReference>
<dbReference type="GO" id="GO:0042102">
    <property type="term" value="P:positive regulation of T cell proliferation"/>
    <property type="evidence" value="ECO:0000315"/>
    <property type="project" value="MGI"/>
</dbReference>
<dbReference type="GO" id="GO:2001214">
    <property type="term" value="P:positive regulation of vasculogenesis"/>
    <property type="evidence" value="ECO:0000315"/>
    <property type="project" value="UniProtKB"/>
</dbReference>
<dbReference type="GO" id="GO:0060312">
    <property type="term" value="P:regulation of blood vessel remodeling"/>
    <property type="evidence" value="ECO:0000315"/>
    <property type="project" value="UniProtKB"/>
</dbReference>
<dbReference type="GO" id="GO:0001558">
    <property type="term" value="P:regulation of cell growth"/>
    <property type="evidence" value="ECO:0000250"/>
    <property type="project" value="UniProtKB"/>
</dbReference>
<dbReference type="GO" id="GO:0045601">
    <property type="term" value="P:regulation of endothelial cell differentiation"/>
    <property type="evidence" value="ECO:0000314"/>
    <property type="project" value="UniProtKB"/>
</dbReference>
<dbReference type="GO" id="GO:0010594">
    <property type="term" value="P:regulation of endothelial cell migration"/>
    <property type="evidence" value="ECO:0000314"/>
    <property type="project" value="UniProtKB"/>
</dbReference>
<dbReference type="GO" id="GO:0042058">
    <property type="term" value="P:regulation of epidermal growth factor receptor signaling pathway"/>
    <property type="evidence" value="ECO:0000315"/>
    <property type="project" value="UniProtKB"/>
</dbReference>
<dbReference type="GO" id="GO:0070372">
    <property type="term" value="P:regulation of ERK1 and ERK2 cascade"/>
    <property type="evidence" value="ECO:0000250"/>
    <property type="project" value="UniProtKB"/>
</dbReference>
<dbReference type="GO" id="GO:1903385">
    <property type="term" value="P:regulation of homophilic cell adhesion"/>
    <property type="evidence" value="ECO:0000250"/>
    <property type="project" value="UniProtKB"/>
</dbReference>
<dbReference type="GO" id="GO:0051896">
    <property type="term" value="P:regulation of phosphatidylinositol 3-kinase/protein kinase B signal transduction"/>
    <property type="evidence" value="ECO:0000250"/>
    <property type="project" value="UniProtKB"/>
</dbReference>
<dbReference type="GO" id="GO:1903670">
    <property type="term" value="P:regulation of sprouting angiogenesis"/>
    <property type="evidence" value="ECO:0000315"/>
    <property type="project" value="UniProtKB"/>
</dbReference>
<dbReference type="GO" id="GO:0046718">
    <property type="term" value="P:symbiont entry into host cell"/>
    <property type="evidence" value="ECO:0000314"/>
    <property type="project" value="MGI"/>
</dbReference>
<dbReference type="GO" id="GO:0044319">
    <property type="term" value="P:wound healing, spreading of cells"/>
    <property type="evidence" value="ECO:0000250"/>
    <property type="project" value="UniProtKB"/>
</dbReference>
<dbReference type="CDD" id="cd20948">
    <property type="entry name" value="IgC2_CEACAM5-like"/>
    <property type="match status" value="1"/>
</dbReference>
<dbReference type="CDD" id="cd05740">
    <property type="entry name" value="IgI_hCEACAM_2_4_6_like"/>
    <property type="match status" value="2"/>
</dbReference>
<dbReference type="CDD" id="cd05774">
    <property type="entry name" value="IgV_CEACAM_D1"/>
    <property type="match status" value="1"/>
</dbReference>
<dbReference type="FunFam" id="2.60.40.10:FF:000340">
    <property type="entry name" value="Carcinoembryonic antigen-related cell adhesion molecule 1"/>
    <property type="match status" value="1"/>
</dbReference>
<dbReference type="FunFam" id="2.60.40.10:FF:000517">
    <property type="entry name" value="Carcinoembryonic antigen-related cell adhesion molecule 1"/>
    <property type="match status" value="1"/>
</dbReference>
<dbReference type="FunFam" id="2.60.40.10:FF:000244">
    <property type="entry name" value="carcinoembryonic antigen-related cell adhesion molecule 16"/>
    <property type="match status" value="2"/>
</dbReference>
<dbReference type="Gene3D" id="2.60.40.10">
    <property type="entry name" value="Immunoglobulins"/>
    <property type="match status" value="4"/>
</dbReference>
<dbReference type="InterPro" id="IPR050831">
    <property type="entry name" value="CEA_cell_adhesion"/>
</dbReference>
<dbReference type="InterPro" id="IPR007110">
    <property type="entry name" value="Ig-like_dom"/>
</dbReference>
<dbReference type="InterPro" id="IPR036179">
    <property type="entry name" value="Ig-like_dom_sf"/>
</dbReference>
<dbReference type="InterPro" id="IPR013783">
    <property type="entry name" value="Ig-like_fold"/>
</dbReference>
<dbReference type="InterPro" id="IPR003599">
    <property type="entry name" value="Ig_sub"/>
</dbReference>
<dbReference type="InterPro" id="IPR003598">
    <property type="entry name" value="Ig_sub2"/>
</dbReference>
<dbReference type="InterPro" id="IPR013106">
    <property type="entry name" value="Ig_V-set"/>
</dbReference>
<dbReference type="PANTHER" id="PTHR44427:SF1">
    <property type="entry name" value="CARCINOEMBRYONIC ANTIGEN-RELATED CELL ADHESION MOLECULE 1"/>
    <property type="match status" value="1"/>
</dbReference>
<dbReference type="PANTHER" id="PTHR44427">
    <property type="entry name" value="CARCINOEMBRYONIC ANTIGEN-RELATED CELL ADHESION MOLECULE 19"/>
    <property type="match status" value="1"/>
</dbReference>
<dbReference type="Pfam" id="PF13895">
    <property type="entry name" value="Ig_2"/>
    <property type="match status" value="1"/>
</dbReference>
<dbReference type="Pfam" id="PF13927">
    <property type="entry name" value="Ig_3"/>
    <property type="match status" value="2"/>
</dbReference>
<dbReference type="Pfam" id="PF07686">
    <property type="entry name" value="V-set"/>
    <property type="match status" value="1"/>
</dbReference>
<dbReference type="SMART" id="SM00409">
    <property type="entry name" value="IG"/>
    <property type="match status" value="3"/>
</dbReference>
<dbReference type="SMART" id="SM00408">
    <property type="entry name" value="IGc2"/>
    <property type="match status" value="3"/>
</dbReference>
<dbReference type="SUPFAM" id="SSF48726">
    <property type="entry name" value="Immunoglobulin"/>
    <property type="match status" value="4"/>
</dbReference>
<dbReference type="PROSITE" id="PS50835">
    <property type="entry name" value="IG_LIKE"/>
    <property type="match status" value="3"/>
</dbReference>
<sequence>MELASAHLHKGQVPWGGLLLTASLLASWSPATTAEVTIEAVPPQVAEDNNVLLLVHNLPLALGAFAWYKGNTTAIDKEIARFVPNSNMNFTGQAYSGREIIYSNGSLLFQMITMKDMGVYTLDMTDENYRRTQATVRFHVHPILLKPNITSNNSNPVEGDDSVSLTCDSYTDPDNINYLWSRNGESLSEGDRLKLSEGNRTLTLLNVTRNDTGPYVCETRNPVSVNRSDPFSLNIIYGPDTPIISPSDIYLHPGSNLNLSCHAASNPPAQYFWLINEKPHASSQELFIPNITTNNSGTYTCFVNNSVTGLSRTTVKNITVLEPVTQPFLQVTNTTVKELDSVTLTCLSNDIGANIQWLFNSQSLQLTERMTLSQNNSILRIDPIKREDAGEYQCEISNPVSVRRSNSIKLDIIFDPTQGGLSDGAIAGIVIGVVAGVALIAGLAYFLYSRKSGGGSDQRDLTEHKPSTSNHNLAPSDNSPNKVDDVAYTVLNFNSQQPNRPTSAPSSPRATETVYSEVKKK</sequence>
<proteinExistence type="evidence at protein level"/>
<accession>P31809</accession>
<accession>Q61350</accession>
<accession>Q61353</accession>
<comment type="function">
    <molecule>Isoform 1</molecule>
    <text evidence="1 2 11 14 16 18 19 21 22 23 24 26 28">Cell adhesion protein that mediates homophilic cell adhesion in a calcium-independent manner (By similarity). Plays a role as coinhibitory receptor in immune response, insulin action and also functions as an activator during angiogenesis (PubMed:16680193, PubMed:17081782, PubMed:18544705, PubMed:21029969, PubMed:21081647, PubMed:22496641, PubMed:22962327, PubMed:23696226). Its coinhibitory receptor function is phosphorylation- and PTPN6 -dependent, which in turn, suppress signal transduction of associated receptors by dephosphorylation of their downstream effectors (PubMed:17081782, PubMed:21029969, PubMed:22496641). Plays a role in immune response, of T-cells, natural killer (NK) and neutrophils (PubMed:17081782, PubMed:21029969, PubMed:22496641, PubMed:23696226). Upon TCR/CD3 complex stimulation, inhibits TCR-mediated cytotoxicity by blocking granule exocytosis by mediating homophilic binding to adjacent cells, allowing interaction with and phosphorylation by LCK and interaction with the TCR/CD3 complex which recruits PTPN6 resulting in dephosphorylation of CD247 and ZAP70 (PubMed:22496641). Also inhibits T-cell proliferation and cytokine production through inhibition of JNK cascade and plays a crucial role in regulating autoimmunity and anti-tumor immunity by inhibiting T-cell through its interaction with HAVCR2 (PubMed:17081782). Upon natural killer (NK) cells activation, inhibit KLRK1-mediated cytolysis of CEACAM1-bearing tumor cells by trans-homophilic interactions with CEACAM1 on the target cell and lead to cis-interaction between CEACAM1 and KLRK1, allowing PTPN6 recruitment and then VAV1 dephosphorylation (PubMed:23696226). Upon neutrophils activation negatively regulates IL1B production by recruiting PTPN6 to a SYK-TLR4-CEACAM1 complex, that dephosphorylates SYK, reducing the production of reactive oxygen species (ROS) and lysosome disruption, which in turn, reduces the activity of the inflammasome (PubMed:22496641). Down-regulates neutrophil production by acting as a coinhibitory receptor for CSF3R by downregulating the CSF3R-STAT3 pathway through recruitment of PTPN6 that dephosphorylates CSF3R (PubMed:21029969). Also regulates insulin action by promoting INS clearance and regulating lipogenesis in liver through regulating insulin signaling (PubMed:18544705). Upon INS stimulation, undergoes phosphorylation by INSR leading to INS clearance by increasing receptor-mediated insulin endocytosis. This inernalization promotes interaction with FASN leading to receptor-mediated insulin degradation and to reduction of FASN activity leading to negative regulation of fatty acid synthesis. INSR-mediated phosphorylation also provokes a down-regulation of cell proliferation through SHC1 interaction resulting in decrease coupling of SHC1 to the MAPK3/ERK1-MAPK1/ERK2 and phosphatidylinositol 3-kinase pathways (By similarity). Functions as activator in angiogenesis by promoting blood vessel remodeling through endothelial cell differentiation and migration and in arteriogenesis by increasing the number of collateral arteries and collateral vessel calibers after ischemia (PubMed:16680193, PubMed:22962327). Also regulates vascular permeability through the VEGFR2 signaling pathway resulting in control of nitric oxide production (PubMed:21081647). Down-regulates cell growth in response to EGF through its interaction with SHC1 that mediates interaction with EGFR resulting in decrease coupling of SHC1 to the MAPK3/ERK1-MAPK1/ERK2 pathway (PubMed:15467833). Negatively regulates platelet aggregation by decreasing platelet adhesion on type I collagen through the GPVI-FcRgamma complex (PubMed:19008452). Inhibits cell migration and cell scattering through interaction with FLNA; interferes with the interaction of FLNA with RALA (By similarity). Mediates bile acid transport activity in a phosphorylation dependent manner (By similarity). Negatively regulates osteoclastogenesis (PubMed:25490771).</text>
</comment>
<comment type="function">
    <molecule>Isoform 2</molecule>
    <text evidence="12 25">Cell adhesion protein that mediates homophilic cell adhesion in a calcium-independent manner (PubMed:1633107). Promotes populations of T-cells regulating IgA production and secretion associated with control of the commensal microbiota and resistance to enteropathogens (PubMed:23123061).</text>
</comment>
<comment type="function">
    <text evidence="10 17">(Microbial infection) In case of murine coronavirus (MHV) infection, serves as receptor for MHV S1 spike glycoprotein.</text>
</comment>
<comment type="subunit">
    <text evidence="8 17 30">(Microbial infection) Interacts with MHV S1 spike glycoprotein.</text>
</comment>
<comment type="subunit">
    <text evidence="1 2 11 21 23 27 31">Monomer. Oligomer. Heterodimer. Homodimer (By similarity). Cis-dimer/oligomer (via Ig-like C2-type and/or via cytoplasmic domains); induced by trans-homophilic cell adhesion through an allosteric mechanism transmitted by the Ig-like V-type domain, and is regulated by intracellular calcium and calmodulin. Interacts (via cytoplasmic domain) with calmodulin in a calcium dependent manner; reduces homophilic cell adhesion through dissociation of dimer (By similarity). Isoform 1 interacts (via cytoplasmic domain) with PTPN11 (preferentially) and PTPN6; cis-homodimer form is preferred; this interaction is decreased by formation of isoform 1 / isoform 2 cis-heterodimers and is dependent on the monomer/dimer equilibrium; this interaction is phosphorylation-dependent (PubMed:9867848). Isoform 1 interacts with LYN (PubMed:22496641). Isoform 1 interacts (via cytoplasmic domain) with SRC (via SH2 domain); this interaction is regulated by trans-homophilic cell adhesion (By similarity). Isoform 1 interacts with LCK; mediates phosphorylation at Tyr-488 and Tyr-515 resulting in PTPN6 association. Isoform 1 interacts with PTPN6; this interaction is phosphorylation-dependent and causes a profound decrease in TCR stimulation-induced CD247 and ZAP70 phosphorylation. Isoform 1 interacts with TCR/CD3 complex through TCR beta chain and CD3E; colocalizes at the cell surface and upon stimulation of the TCR/CD3 complex recruits PTPN6 in the TCR/CD3 complex, resulting in dephosphorylation of CD247 and ZAP70 (By similarity). Isoform 1 interacts (via cytoplasmic domain) with SHC1 (via SH2 domain); SHC1 mediates interaction with INSR or EGFR in a Ser-503 phosphorylation-dependent manner (PubMed:15467833). Isoform 1 interacts with EGFR; the interaction is indirect (By similarity). Isoform 1 interacts with CSF3R; down-regulates the CSF3R-STAT3 pathway through recruitment of PTPN6 that dephosphorylates CSF3R (PubMed:21029969). Isoform 1 (phosphorylated form) interacts with TLR4 and SYK; recruits PTPN6 that dephosphorylates SYK, reducing the production of reactive oxygen species (ROS) and lysosome disruption, leading to a reduction of the inflammasome activity (PubMed:22496641). Isoform 1 interacts with FLNA; inhibits cell migration and cell scattering by interfering with the interaction of FLNA with RALA. Isoform 1 interacts (via cytoplasmic domain) with PXN; the interaction is phosphotyrosyl-dependent. Isoform 1 interacts with KLRK1; recruits PTPN6 that dephosphorylates VAV1. Isoform 1 interacts with CEACAM8 (By similarity). Isoform 1 interacts with FASN; this interaction is insulin and phosphorylation-dependent; reduces fatty-acid synthase activity (By similarity). Interacts (via Ig-like V-type) with HAVCR2 (via Ig-like V-type); facilitates the maturation and cell surface expression of HAVCR2 thereby regulating T-cell tolerance induction (By similarity) (PubMed:25363763). Isoform 2 interacts (via the cytoplasmic domain) with ANXA2; this interaction is regulated by phosphorylation and appears in the AIIt complex. Interacts (via Lewis X moieties) with CD209 (via C-type lectin domain); this interaction is regulated by the glycosylation pattern of CEACAM1 on cell types and regulates contact between dendritic cells and neutrophils (By similarity).</text>
</comment>
<comment type="subcellular location">
    <molecule>Isoform 1</molecule>
    <subcellularLocation>
        <location evidence="19 30">Cell membrane</location>
        <topology evidence="2">Single-pass type I membrane protein</topology>
    </subcellularLocation>
    <subcellularLocation>
        <location evidence="2">Lateral cell membrane</location>
    </subcellularLocation>
    <subcellularLocation>
        <location evidence="2">Apical cell membrane</location>
    </subcellularLocation>
    <subcellularLocation>
        <location evidence="2">Basal cell membrane</location>
    </subcellularLocation>
    <subcellularLocation>
        <location evidence="2">Cell junction</location>
    </subcellularLocation>
    <subcellularLocation>
        <location evidence="2">Cell junction</location>
        <location evidence="2">Adherens junction</location>
    </subcellularLocation>
    <text evidence="2">Canalicular domain of hepatocyte plasma membranes. Found as a mixture of monomer, dimer and oligomer in the plasma membrane. Occurs predominantly as cis-dimers and/or small cis-oligomers in the cell junction regions. Found as dimer in the solution. Predominantly localized to the lateral cell membranes.</text>
</comment>
<comment type="subcellular location">
    <molecule>Isoform 2</molecule>
    <subcellularLocation>
        <location evidence="12 30">Cell membrane</location>
        <topology evidence="2">Single-pass type I membrane protein</topology>
    </subcellularLocation>
    <subcellularLocation>
        <location evidence="2">Lateral cell membrane</location>
    </subcellularLocation>
    <subcellularLocation>
        <location evidence="2">Apical cell membrane</location>
    </subcellularLocation>
    <subcellularLocation>
        <location evidence="2">Basal cell membrane</location>
    </subcellularLocation>
    <subcellularLocation>
        <location evidence="2">Cell junction</location>
    </subcellularLocation>
    <subcellularLocation>
        <location evidence="2">Cell junction</location>
        <location evidence="2">Adherens junction</location>
    </subcellularLocation>
    <subcellularLocation>
        <location evidence="1">Cytoplasmic vesicle</location>
        <location evidence="1">Secretory vesicle</location>
    </subcellularLocation>
    <text evidence="1 2">Predominantly localized to the lateral cell membranes. Found as a mixture of monomer, dimer and oligomer in the plasma membrane. Occurs predominantly as cis-dimers and/or small cis-oligomers in the cell junction regions (By similarity). Co-localizes with ANXA2 in secretory vesicles and with S100A10/p11 at the plasma membrane (By similarity).</text>
</comment>
<comment type="subcellular location">
    <subcellularLocation>
        <location evidence="29">Cell projection</location>
        <location evidence="29">Microvillus membrane</location>
        <topology evidence="36">Single-pass type I membrane protein</topology>
    </subcellularLocation>
    <subcellularLocation>
        <location evidence="29">Apical cell membrane</location>
        <topology evidence="36">Single-pass type I membrane protein</topology>
    </subcellularLocation>
    <text evidence="1 29">Localized to the apical glycocalyx surface (By similarity). Colocalizes with CEACAM20 at the apical brush border of intestinal cells (PubMed:25908210).</text>
</comment>
<comment type="alternative products">
    <event type="alternative splicing"/>
    <isoform>
        <id>P31809-1</id>
        <name>1</name>
        <name evidence="32">Ceacam1-4L</name>
        <name>Bgpd</name>
        <sequence type="displayed"/>
    </isoform>
    <isoform>
        <id>P31809-2</id>
        <name>2</name>
        <name evidence="32">Ceacam1-4S</name>
        <name>Bgpa</name>
        <name>mmCGM1a</name>
        <sequence type="described" ref="VSP_002484 VSP_002485"/>
    </isoform>
    <isoform>
        <id>P31809-3</id>
        <name>3</name>
        <name evidence="32">Ceacam1-2L</name>
        <name>Bgpg</name>
        <sequence type="described" ref="VSP_036040 VSP_036041"/>
    </isoform>
    <isoform>
        <id>P31809-4</id>
        <name>4</name>
        <name evidence="32">Ceacam1-2S</name>
        <name>Bgpc</name>
        <sequence type="described" ref="VSP_058517 VSP_002484 VSP_002485"/>
    </isoform>
</comment>
<comment type="tissue specificity">
    <text evidence="9 21 25 28 29">Expressed in granulocytes, lymphocytes, granulocytes, B cells, and T-cells (PubMed:11994468). Expressed in bone. Highly expressed in liver and femur (PubMed:25490771). Highly expressed in neutrophils, and to a lesser extent inmonocytes, and macrophages. Slightly higher expressed in peripheral blood neutrophils (PBNs) (PubMed:21029969). Intestinal T-cells predominantly express isoform 2 while extraintestinal T-cells mainly express isoform 1 (PubMed:23123061). Expressed in small intestine and colon (PubMed:25908210).</text>
</comment>
<comment type="developmental stage">
    <text evidence="28">Expression increases during the early stages of osteoblast differentiation, and decreases towards terminal osteoblast differentiation. In addition, expression markedly decreases during the course of osteoclastogenesis.</text>
</comment>
<comment type="induction">
    <text evidence="25 26 29">In intestinal epithelium, up-regulated in the presence of Gram-positive commensal gut bacteria (PubMed:25908210). May also be up-regulated by interferon gamma (IFNG) and TNF (TNF-alpha) (PubMed:25908210). Isoform 2: Expression is promoted and maintained by the mucosal environment (PubMed:23123061). Induced by IL2 on natural killer cell (PubMed:23696226).</text>
</comment>
<comment type="domain">
    <text evidence="2">Ig-like V-type domain mediates trans-homophilic cell adhesion through homodimerization and this active process is regulated by tyrosine kinase, PTPN11 and PTPN6. Ig-like C2-type and/or cytoplasmic domains mediate cis-dimer/oligomer.</text>
</comment>
<comment type="PTM">
    <molecule>Isoform 1</molecule>
    <text evidence="1 2 21 31">Phosphorylated on serine and tyrosine (By similarity). Isoform 1 is phosphorylated on tyrosine by Src family kinases like SRC and LCK and by receptor like CSF3R, EGFR and INSR upon stimulation (PubMed:21029969, PubMed:9867848). Phosphorylated at Ser-503; mediates activity. Phosphorylated at Tyr-488; regulates activity (By similarity). Phosphorylated at Tyr-488 by EGFR and INSR upon stimulation; this phosphorylation is Ser-503-phosphorylation-dependent; mediates cellular internalization; increases interaction with FASN (By similarity). Phosphorylated at Tyr-488 and Tyr-515 by LCK; mediates PTPN6 association and is regulated by homophilic ligation of CEACAM1 in the absence of T-cell activation (By similarity). Phosphorylated at Tyr-515; mediates interaction with PTPN11 (PubMed:9867848).</text>
</comment>
<comment type="PTM">
    <molecule>Isoform 2</molecule>
    <text evidence="1 2">Phosphorylated on serine and threonine.</text>
</comment>
<comment type="disruption phenotype">
    <text evidence="18 19 21 22 28">Knockout mice exhibit impairment of insulin clearance and hyperinsulinemia, which cause insulin resistance; develop insulin resistance primarily in liver (PubMed:18544705). Display normal white blood cell, red blood cell, hemoglobin and platelet. On the other hand, mice have a high number of neutrophils. Display also increased thrombus growth, and enhanced susceptibility to type I collagen induced pulmonary thromboembolism (PubMed:19008452). Spontaneously develop systemic neutrophilia. Upon Listeria Monocytogenes (LM) infection mice die dramatically faster within 7 days and display an improved bacterial clearance accompanied by severe tissue damage and necrosis in the liver (PubMed:21029969). Knockout mice present an increased basal permeability (PubMed:21081647). Knockout mice show a reduced bone mass namely a decreased trabecular bone volume accompanied by a reduction in trabecular number and an increase in trabecular separation (PubMed:25490771).</text>
</comment>
<comment type="similarity">
    <text evidence="36">Belongs to the immunoglobulin superfamily. CEA family.</text>
</comment>
<keyword id="KW-0002">3D-structure</keyword>
<keyword id="KW-0025">Alternative splicing</keyword>
<keyword id="KW-0965">Cell junction</keyword>
<keyword id="KW-1003">Cell membrane</keyword>
<keyword id="KW-0966">Cell projection</keyword>
<keyword id="KW-0968">Cytoplasmic vesicle</keyword>
<keyword id="KW-0903">Direct protein sequencing</keyword>
<keyword id="KW-1015">Disulfide bond</keyword>
<keyword id="KW-0325">Glycoprotein</keyword>
<keyword id="KW-1183">Host cell receptor for virus entry</keyword>
<keyword id="KW-0945">Host-virus interaction</keyword>
<keyword id="KW-0393">Immunoglobulin domain</keyword>
<keyword id="KW-0472">Membrane</keyword>
<keyword id="KW-0597">Phosphoprotein</keyword>
<keyword id="KW-0675">Receptor</keyword>
<keyword id="KW-1185">Reference proteome</keyword>
<keyword id="KW-0677">Repeat</keyword>
<keyword id="KW-0732">Signal</keyword>
<keyword id="KW-0812">Transmembrane</keyword>
<keyword id="KW-1133">Transmembrane helix</keyword>
<feature type="signal peptide" evidence="13">
    <location>
        <begin position="1"/>
        <end position="34"/>
    </location>
</feature>
<feature type="chain" id="PRO_0000014563" description="Cell adhesion molecule CEACAM1">
    <location>
        <begin position="35"/>
        <end position="521"/>
    </location>
</feature>
<feature type="topological domain" description="Extracellular" evidence="4">
    <location>
        <begin position="35"/>
        <end position="428"/>
    </location>
</feature>
<feature type="transmembrane region" description="Helical" evidence="4">
    <location>
        <begin position="429"/>
        <end position="447"/>
    </location>
</feature>
<feature type="topological domain" description="Cytoplasmic" evidence="4">
    <location>
        <begin position="448"/>
        <end position="521"/>
    </location>
</feature>
<feature type="domain" description="Ig-like V-type" evidence="3">
    <location>
        <begin position="35"/>
        <end position="142"/>
    </location>
</feature>
<feature type="domain" description="Ig-like C2-type 1" evidence="5">
    <location>
        <begin position="147"/>
        <end position="234"/>
    </location>
</feature>
<feature type="domain" description="Ig-like C2-type 2" evidence="5">
    <location>
        <begin position="239"/>
        <end position="319"/>
    </location>
</feature>
<feature type="domain" description="Ig-like C2-type 3" evidence="5">
    <location>
        <begin position="323"/>
        <end position="411"/>
    </location>
</feature>
<feature type="region of interest" description="Required for homophilic binding" evidence="2">
    <location>
        <begin position="39"/>
        <end position="142"/>
    </location>
</feature>
<feature type="region of interest" description="Interaction with calmodulin" evidence="2">
    <location>
        <begin position="445"/>
        <end position="457"/>
    </location>
</feature>
<feature type="region of interest" description="Interaction with FLNA" evidence="2">
    <location>
        <begin position="447"/>
        <end position="521"/>
    </location>
</feature>
<feature type="region of interest" description="Disordered" evidence="7">
    <location>
        <begin position="455"/>
        <end position="521"/>
    </location>
</feature>
<feature type="region of interest" description="Required for interaction with PTPN11 and PTPN6 and for control of phosphorylation level" evidence="31">
    <location>
        <begin position="484"/>
        <end position="521"/>
    </location>
</feature>
<feature type="region of interest" description="Essential for interaction with PTPN11 and PTPN6" evidence="31">
    <location>
        <begin position="515"/>
        <end position="518"/>
    </location>
</feature>
<feature type="compositionally biased region" description="Basic and acidic residues" evidence="7">
    <location>
        <begin position="457"/>
        <end position="466"/>
    </location>
</feature>
<feature type="compositionally biased region" description="Polar residues" evidence="7">
    <location>
        <begin position="467"/>
        <end position="481"/>
    </location>
</feature>
<feature type="compositionally biased region" description="Polar residues" evidence="7">
    <location>
        <begin position="491"/>
        <end position="514"/>
    </location>
</feature>
<feature type="modified residue" description="Phosphotyrosine; by SRC, LCK, INSR and EGFR" evidence="22 31">
    <location>
        <position position="488"/>
    </location>
</feature>
<feature type="modified residue" description="Phosphoserine" evidence="2">
    <location>
        <position position="503"/>
    </location>
</feature>
<feature type="modified residue" description="Phosphotyrosine; by INSR, SRC and LCK" evidence="22 31">
    <location>
        <position position="515"/>
    </location>
</feature>
<feature type="glycosylation site" description="N-linked (GlcNAc...) asparagine" evidence="6 8 20">
    <location>
        <position position="71"/>
    </location>
</feature>
<feature type="glycosylation site" description="N-linked (GlcNAc...) asparagine" evidence="6 8 20">
    <location>
        <position position="89"/>
    </location>
</feature>
<feature type="glycosylation site" description="N-linked (GlcNAc...) asparagine" evidence="6 8">
    <location>
        <position position="104"/>
    </location>
</feature>
<feature type="glycosylation site" description="N-linked (GlcNAc...) asparagine" evidence="6">
    <location>
        <position position="148"/>
    </location>
</feature>
<feature type="glycosylation site" description="N-linked (GlcNAc...) asparagine" evidence="1 6">
    <location>
        <position position="152"/>
    </location>
</feature>
<feature type="glycosylation site" description="N-linked (GlcNAc...) asparagine" evidence="6">
    <location>
        <position position="199"/>
    </location>
</feature>
<feature type="glycosylation site" description="N-linked (GlcNAc...) asparagine" evidence="6 15">
    <location>
        <position position="206"/>
    </location>
</feature>
<feature type="glycosylation site" description="N-linked (GlcNAc...) asparagine" evidence="1 6">
    <location>
        <position position="210"/>
    </location>
</feature>
<feature type="glycosylation site" description="N-linked (GlcNAc...) asparagine" evidence="1 6">
    <location>
        <position position="226"/>
    </location>
</feature>
<feature type="glycosylation site" description="N-linked (GlcNAc...) asparagine" evidence="6">
    <location>
        <position position="258"/>
    </location>
</feature>
<feature type="glycosylation site" description="N-linked (GlcNAc...) asparagine" evidence="6">
    <location>
        <position position="290"/>
    </location>
</feature>
<feature type="glycosylation site" description="N-linked (GlcNAc...) asparagine" evidence="6">
    <location>
        <position position="294"/>
    </location>
</feature>
<feature type="glycosylation site" description="N-linked (GlcNAc...) asparagine" evidence="6">
    <location>
        <position position="304"/>
    </location>
</feature>
<feature type="glycosylation site" description="N-linked (GlcNAc...) asparagine" evidence="6 20">
    <location>
        <position position="317"/>
    </location>
</feature>
<feature type="glycosylation site" description="N-linked (GlcNAc...) asparagine" evidence="6 8 20">
    <location>
        <position position="333"/>
    </location>
</feature>
<feature type="glycosylation site" description="N-linked (GlcNAc...) asparagine" evidence="6 20">
    <location>
        <position position="375"/>
    </location>
</feature>
<feature type="disulfide bond" evidence="5 37">
    <location>
        <begin position="167"/>
        <end position="217"/>
    </location>
</feature>
<feature type="disulfide bond" evidence="5 37">
    <location>
        <begin position="261"/>
        <end position="301"/>
    </location>
</feature>
<feature type="disulfide bond" evidence="5 8">
    <location>
        <begin position="346"/>
        <end position="394"/>
    </location>
</feature>
<feature type="splice variant" id="VSP_058517" description="In isoform 4." evidence="35">
    <original>PILLKPNITSNNSNPVEGDDSVSLTCDSYTDPDNINYLWSRNGESLSEGDRLKLSEGNRTLTLLNVTRNDTGPYVCETRNPVSVNRSDPFSLNIIYGPDTPIISPSDIYLHPGSNLNLSCHAASNPPAQYFWLINEKPHASSQELFIPNITTNNSGTYTCFVNNSVTGLSRTTVKNITVLE</original>
    <variation>Q</variation>
    <location>
        <begin position="142"/>
        <end position="322"/>
    </location>
</feature>
<feature type="splice variant" id="VSP_036040" description="In isoform 3." evidence="35">
    <original>P</original>
    <variation>Q</variation>
    <location>
        <position position="142"/>
    </location>
</feature>
<feature type="splice variant" id="VSP_036041" description="In isoform 3." evidence="35">
    <location>
        <begin position="143"/>
        <end position="322"/>
    </location>
</feature>
<feature type="splice variant" id="VSP_002484" description="In isoform 2 and isoform 4." evidence="33 34 35">
    <original>GSDQ</original>
    <variation>SGSF</variation>
    <location>
        <begin position="455"/>
        <end position="458"/>
    </location>
</feature>
<feature type="splice variant" id="VSP_002485" description="In isoform 2 and isoform 4." evidence="33 34 35">
    <location>
        <begin position="459"/>
        <end position="521"/>
    </location>
</feature>
<feature type="mutagenesis site" description="Phosphorylated on tyrosine. Abrogates interaction with PTPN11. Abrogates interaction with PTPN11 and phosphorylation; when associated with F-515. Reduces endothelial cell migration and differentiation. Suppresses T cell proliferation; when associated with F-515. Increases cytokine production; when associated with F-515. Activates JNK cascade; when associated with F-515. Abrogates CEACAM1-L phosphorylation in endothelial cells and decreases amounts of released nitric oxide upon VEGF stimulation. Impairs interaction with and inactivation of SYK; when associated with F-515." evidence="14 16 22 23 31">
    <original>Y</original>
    <variation>F</variation>
    <location>
        <position position="488"/>
    </location>
</feature>
<feature type="mutagenesis site" description="Reduces endothelial cell migration and differentiation." evidence="14">
    <original>S</original>
    <variation>A</variation>
    <location>
        <position position="503"/>
    </location>
</feature>
<feature type="mutagenesis site" description="Phosphorylated on tyrosine. Abrogates interaction with PTPN11. Abrogates interaction with PTPN11 and phosphorylation; when associated with F-488. Suppresses T cell proliferation; when associated with F-488. Increases cytokine production; when associated with F-488. Activates JNK cascade; when associated with F-488. Abrogates CEACAM1-L phosphorylation in endothelial cells upon VEGF stimulation. Impairs interaction with and inactivation of SYK; when associated with F-488." evidence="16 22 23 31">
    <original>Y</original>
    <variation>F</variation>
    <location>
        <position position="515"/>
    </location>
</feature>
<feature type="mutagenesis site" description="Impairs interaction with PTPN11 and PTPN6. Doesn't affect phosphorylation." evidence="31">
    <original>V</original>
    <variation>A</variation>
    <location>
        <position position="518"/>
    </location>
</feature>
<feature type="mutagenesis site" description="Reduces Tyr phosphorylation by at least 50% and almost completely abrogates interaction with PTPN11 and PTPN6." evidence="31">
    <location>
        <begin position="519"/>
        <end position="521"/>
    </location>
</feature>
<feature type="sequence conflict" description="In Ref. 3; CAA47699/CAA47695." evidence="36" ref="3">
    <original>SQ</original>
    <variation>RE</variation>
    <location>
        <begin position="361"/>
        <end position="362"/>
    </location>
</feature>
<feature type="strand" evidence="40">
    <location>
        <begin position="37"/>
        <end position="46"/>
    </location>
</feature>
<feature type="strand" evidence="40">
    <location>
        <begin position="51"/>
        <end position="56"/>
    </location>
</feature>
<feature type="strand" evidence="40">
    <location>
        <begin position="63"/>
        <end position="71"/>
    </location>
</feature>
<feature type="helix" evidence="40">
    <location>
        <begin position="75"/>
        <end position="77"/>
    </location>
</feature>
<feature type="strand" evidence="40">
    <location>
        <begin position="78"/>
        <end position="83"/>
    </location>
</feature>
<feature type="helix" evidence="40">
    <location>
        <begin position="84"/>
        <end position="86"/>
    </location>
</feature>
<feature type="strand" evidence="40">
    <location>
        <begin position="88"/>
        <end position="91"/>
    </location>
</feature>
<feature type="strand" evidence="40">
    <location>
        <begin position="97"/>
        <end position="101"/>
    </location>
</feature>
<feature type="strand" evidence="40">
    <location>
        <begin position="107"/>
        <end position="109"/>
    </location>
</feature>
<feature type="helix" evidence="40">
    <location>
        <begin position="114"/>
        <end position="116"/>
    </location>
</feature>
<feature type="strand" evidence="40">
    <location>
        <begin position="118"/>
        <end position="125"/>
    </location>
</feature>
<feature type="strand" evidence="40">
    <location>
        <begin position="130"/>
        <end position="141"/>
    </location>
</feature>
<feature type="strand" evidence="40">
    <location>
        <begin position="328"/>
        <end position="332"/>
    </location>
</feature>
<feature type="strand" evidence="39">
    <location>
        <begin position="334"/>
        <end position="336"/>
    </location>
</feature>
<feature type="strand" evidence="40">
    <location>
        <begin position="342"/>
        <end position="347"/>
    </location>
</feature>
<feature type="strand" evidence="40">
    <location>
        <begin position="354"/>
        <end position="359"/>
    </location>
</feature>
<feature type="strand" evidence="40">
    <location>
        <begin position="368"/>
        <end position="373"/>
    </location>
</feature>
<feature type="turn" evidence="40">
    <location>
        <begin position="374"/>
        <end position="377"/>
    </location>
</feature>
<feature type="strand" evidence="40">
    <location>
        <begin position="378"/>
        <end position="383"/>
    </location>
</feature>
<feature type="helix" evidence="40">
    <location>
        <begin position="386"/>
        <end position="388"/>
    </location>
</feature>
<feature type="strand" evidence="40">
    <location>
        <begin position="390"/>
        <end position="397"/>
    </location>
</feature>
<feature type="strand" evidence="40">
    <location>
        <begin position="408"/>
        <end position="410"/>
    </location>
</feature>
<name>CEAM1_MOUSE</name>
<evidence type="ECO:0000250" key="1">
    <source>
        <dbReference type="UniProtKB" id="P13688"/>
    </source>
</evidence>
<evidence type="ECO:0000250" key="2">
    <source>
        <dbReference type="UniProtKB" id="P16573"/>
    </source>
</evidence>
<evidence type="ECO:0000250" key="3">
    <source>
        <dbReference type="UniProtKB" id="P31997"/>
    </source>
</evidence>
<evidence type="ECO:0000255" key="4"/>
<evidence type="ECO:0000255" key="5">
    <source>
        <dbReference type="PROSITE-ProRule" id="PRU00114"/>
    </source>
</evidence>
<evidence type="ECO:0000255" key="6">
    <source>
        <dbReference type="PROSITE-ProRule" id="PRU00498"/>
    </source>
</evidence>
<evidence type="ECO:0000256" key="7">
    <source>
        <dbReference type="SAM" id="MobiDB-lite"/>
    </source>
</evidence>
<evidence type="ECO:0000269" key="8">
    <source>
    </source>
</evidence>
<evidence type="ECO:0000269" key="9">
    <source>
    </source>
</evidence>
<evidence type="ECO:0000269" key="10">
    <source>
    </source>
</evidence>
<evidence type="ECO:0000269" key="11">
    <source>
    </source>
</evidence>
<evidence type="ECO:0000269" key="12">
    <source>
    </source>
</evidence>
<evidence type="ECO:0000269" key="13">
    <source>
    </source>
</evidence>
<evidence type="ECO:0000269" key="14">
    <source>
    </source>
</evidence>
<evidence type="ECO:0000269" key="15">
    <source>
    </source>
</evidence>
<evidence type="ECO:0000269" key="16">
    <source>
    </source>
</evidence>
<evidence type="ECO:0000269" key="17">
    <source>
    </source>
</evidence>
<evidence type="ECO:0000269" key="18">
    <source>
    </source>
</evidence>
<evidence type="ECO:0000269" key="19">
    <source>
    </source>
</evidence>
<evidence type="ECO:0000269" key="20">
    <source>
    </source>
</evidence>
<evidence type="ECO:0000269" key="21">
    <source>
    </source>
</evidence>
<evidence type="ECO:0000269" key="22">
    <source>
    </source>
</evidence>
<evidence type="ECO:0000269" key="23">
    <source>
    </source>
</evidence>
<evidence type="ECO:0000269" key="24">
    <source>
    </source>
</evidence>
<evidence type="ECO:0000269" key="25">
    <source>
    </source>
</evidence>
<evidence type="ECO:0000269" key="26">
    <source>
    </source>
</evidence>
<evidence type="ECO:0000269" key="27">
    <source>
    </source>
</evidence>
<evidence type="ECO:0000269" key="28">
    <source>
    </source>
</evidence>
<evidence type="ECO:0000269" key="29">
    <source>
    </source>
</evidence>
<evidence type="ECO:0000269" key="30">
    <source>
    </source>
</evidence>
<evidence type="ECO:0000269" key="31">
    <source>
    </source>
</evidence>
<evidence type="ECO:0000303" key="32">
    <source>
    </source>
</evidence>
<evidence type="ECO:0000303" key="33">
    <source>
    </source>
</evidence>
<evidence type="ECO:0000303" key="34">
    <source>
    </source>
</evidence>
<evidence type="ECO:0000303" key="35">
    <source>
    </source>
</evidence>
<evidence type="ECO:0000305" key="36"/>
<evidence type="ECO:0000305" key="37">
    <source>
    </source>
</evidence>
<evidence type="ECO:0000312" key="38">
    <source>
        <dbReference type="MGI" id="MGI:1347245"/>
    </source>
</evidence>
<evidence type="ECO:0007829" key="39">
    <source>
        <dbReference type="PDB" id="1L6Z"/>
    </source>
</evidence>
<evidence type="ECO:0007829" key="40">
    <source>
        <dbReference type="PDB" id="3R4D"/>
    </source>
</evidence>
<reference key="1">
    <citation type="journal article" date="1991" name="J. Virol.">
        <title>Cloning of the mouse hepatitis virus (MHV) receptor: expression in human and hamster cell lines confers susceptibility to MHV.</title>
        <authorList>
            <person name="Dveksler G.S."/>
            <person name="Pensiero M.N."/>
            <person name="Cardellichio C.B."/>
            <person name="Williams R.K."/>
            <person name="Jiang G.-S."/>
            <person name="Holmes K.V."/>
            <person name="Dieffenbach C.W."/>
        </authorList>
    </citation>
    <scope>NUCLEOTIDE SEQUENCE [MRNA] (ISOFORM 2)</scope>
    <scope>INTERACTION WITH MHV SPIKE GLYCOPROTEIN (MICROBIAL INFECTION)</scope>
    <scope>FUNCTION (MICROBIAL INFECTION)</scope>
    <source>
        <strain>BALB/cJ</strain>
        <strain>CD-1</strain>
        <tissue>Colon</tissue>
        <tissue>Liver</tissue>
    </source>
</reference>
<reference key="2">
    <citation type="journal article" date="1992" name="Cell Growth Differ.">
        <title>mmCGM1a: a mouse carcinoembryonic antigen gene family member, generated by alternative splicing, functions as an adhesion molecule.</title>
        <authorList>
            <person name="McCuaig K."/>
            <person name="Turbide C."/>
            <person name="Beauchemin N."/>
        </authorList>
    </citation>
    <scope>NUCLEOTIDE SEQUENCE [MRNA] (ISOFORM 2)</scope>
    <scope>SUBCELLULAR LOCATION</scope>
    <scope>FUNCTION</scope>
    <source>
        <strain>CD-1</strain>
        <tissue>Colon</tissue>
    </source>
</reference>
<reference key="3">
    <citation type="journal article" date="1993" name="Gene">
        <title>Expression of the Bgp gene and characterization of mouse colon biliary glycoprotein isoforms.</title>
        <authorList>
            <person name="McCuaig K."/>
            <person name="Rosenberg M."/>
            <person name="Nedellec P."/>
            <person name="Turbide C."/>
            <person name="Beauchemin N."/>
        </authorList>
    </citation>
    <scope>NUCLEOTIDE SEQUENCE [MRNA] (ISOFORMS 1; 3 AND 4)</scope>
    <scope>ALTERNATIVE SPLICING</scope>
    <source>
        <strain>CD-1</strain>
        <tissue>Colon</tissue>
    </source>
</reference>
<reference key="4">
    <citation type="journal article" date="1991" name="Proc. Natl. Acad. Sci. U.S.A.">
        <title>Receptor for mouse hepatitis virus is a member of the carcinoembryonic antigen family of glycoproteins.</title>
        <authorList>
            <person name="Williams R.K."/>
            <person name="Jiang G.-S."/>
            <person name="Holmes K.V."/>
        </authorList>
    </citation>
    <scope>PROTEIN SEQUENCE OF 35-59</scope>
</reference>
<reference key="5">
    <citation type="submission" date="2009-01" db="UniProtKB">
        <authorList>
            <person name="Lubec G."/>
            <person name="Sunyer B."/>
            <person name="Chen W.-Q."/>
        </authorList>
    </citation>
    <scope>PROTEIN SEQUENCE OF 116-130</scope>
    <scope>IDENTIFICATION BY MASS SPECTROMETRY</scope>
    <source>
        <strain>OF1</strain>
        <tissue>Hippocampus</tissue>
    </source>
</reference>
<reference key="6">
    <citation type="journal article" date="1993" name="J. Virol.">
        <title>Several members of the mouse carcinoembryonic antigen-related glycoprotein family are functional receptors for the coronavirus mouse hepatitis virus-A59.</title>
        <authorList>
            <person name="Dveksler G.S."/>
            <person name="Dieffenback C.B."/>
            <person name="Cardellichio C.B."/>
            <person name="McCuaig K."/>
            <person name="Pensiero M.N."/>
            <person name="Jiang G.-S."/>
            <person name="Beauchemin N."/>
            <person name="Holmes K.V."/>
        </authorList>
    </citation>
    <scope>SUBCELLULAR LOCATION</scope>
    <scope>ALTERNATIVE SPLICING</scope>
    <scope>INTERACTION WITH MHV SPIKE GLYCOPROTEIN (MICROBIAL INFECTION)</scope>
    <source>
        <strain>CD-1</strain>
        <tissue>Colon</tissue>
    </source>
</reference>
<reference key="7">
    <citation type="journal article" date="1999" name="Exp. Cell Res.">
        <title>Redefined nomenclature for members of the carcinoembryonic antigen family.</title>
        <authorList>
            <person name="Beauchemin N."/>
            <person name="Draber P."/>
            <person name="Dveksler G."/>
            <person name="Gold P."/>
            <person name="Gray-Owen S."/>
            <person name="Grunert F."/>
            <person name="Hammarstrom S."/>
            <person name="Holmes K.V."/>
            <person name="Karlsson A."/>
            <person name="Kuroki M."/>
            <person name="Lin S.H."/>
            <person name="Lucka L."/>
            <person name="Najjar S.M."/>
            <person name="Neumaier M."/>
            <person name="Obrink B."/>
            <person name="Shively J.E."/>
            <person name="Skubitz K.M."/>
            <person name="Stanners C.P."/>
            <person name="Thomas P."/>
            <person name="Thompson J.A."/>
            <person name="Virji M."/>
            <person name="von Kleist S."/>
            <person name="Wagener C."/>
            <person name="Watt S."/>
            <person name="Zimmermann W."/>
        </authorList>
    </citation>
    <scope>NOMENCLATURE OF ALTERNATIVE SPLICING ISOFORMS</scope>
</reference>
<reference key="8">
    <citation type="journal article" date="1999" name="J. Biol. Chem.">
        <title>The carboxyl-terminal region of biliary glycoprotein controls its tyrosine phosphorylation and association with protein-tyrosine phosphatases SHP-1 and SHP-2 in epithelial cells.</title>
        <authorList>
            <person name="Huber M."/>
            <person name="Izzi L."/>
            <person name="Grondin P."/>
            <person name="Houde C."/>
            <person name="Kunath T."/>
            <person name="Veillette A."/>
            <person name="Beauchemin N."/>
        </authorList>
    </citation>
    <scope>INTERACTION WITH PTPN11 AND PTPN6</scope>
    <scope>PHOSPHORYLATION AT TYR-488 AND TYR-515 BY SRC</scope>
    <scope>REGION</scope>
    <scope>MUTAGENESIS OF TYR-488; TYR-515; 519-LYS--LYS-521 AND VAL-518</scope>
</reference>
<reference key="9">
    <citation type="journal article" date="2002" name="J. Immunol.">
        <title>Carcinoembryonic antigen-related cell adhesion molecule 1 expression and signaling in human, mouse, and rat leukocytes: evidence for replacement of the short cytoplasmic domain isoform by glycosylphosphatidylinositol-linked proteins in human leukocytes.</title>
        <authorList>
            <person name="Singer B.B."/>
            <person name="Scheffrahn I."/>
            <person name="Heymann R."/>
            <person name="Sigmundsson K."/>
            <person name="Kammerer R."/>
            <person name="Obrink B."/>
        </authorList>
    </citation>
    <scope>TISSUE SPECIFICITY</scope>
</reference>
<reference key="10">
    <citation type="journal article" date="2004" name="J. Clin. Invest.">
        <title>CEACAM1 modulates epidermal growth factor receptor--mediated cell proliferation.</title>
        <authorList>
            <person name="Abou-Rjaily G.A."/>
            <person name="Lee S.J."/>
            <person name="May D."/>
            <person name="Al-Share Q.Y."/>
            <person name="Deangelis A.M."/>
            <person name="Ruch R.J."/>
            <person name="Neumaier M."/>
            <person name="Kalthoff H."/>
            <person name="Lin S.H."/>
            <person name="Najjar S.M."/>
        </authorList>
    </citation>
    <scope>INTERACTION WITH SHC1</scope>
    <scope>FUNCTION</scope>
</reference>
<reference key="11">
    <citation type="journal article" date="2004" name="J. Virol.">
        <title>Ceacam1a-/- mice are completely resistant to infection by murine coronavirus mouse hepatitis virus A59.</title>
        <authorList>
            <person name="Hemmila E."/>
            <person name="Turbide C."/>
            <person name="Olson M."/>
            <person name="Jothy S."/>
            <person name="Holmes K.V."/>
            <person name="Beauchemin N."/>
        </authorList>
    </citation>
    <scope>FUNCTION (MICROBIAL INFECTION)</scope>
</reference>
<reference key="12">
    <citation type="journal article" date="2006" name="Immunity">
        <title>SHP1 phosphatase-dependent T cell inhibition by CEACAM1 adhesion molecule isoforms.</title>
        <authorList>
            <person name="Nagaishi T."/>
            <person name="Pao L."/>
            <person name="Lin S.H."/>
            <person name="Iijima H."/>
            <person name="Kaser A."/>
            <person name="Qiao S.W."/>
            <person name="Chen Z."/>
            <person name="Glickman J."/>
            <person name="Najjar S.M."/>
            <person name="Nakajima A."/>
            <person name="Neel B.G."/>
            <person name="Blumberg R.S."/>
        </authorList>
    </citation>
    <scope>FUNCTION</scope>
    <scope>MUTAGENESIS OF TYR-488 AND TYR-515</scope>
</reference>
<reference key="13">
    <citation type="journal article" date="2006" name="J. Clin. Invest.">
        <title>Carcinoembryonic antigen-related cell adhesion molecule 1 modulates vascular remodeling in vitro and in vivo.</title>
        <authorList>
            <person name="Horst A.K."/>
            <person name="Ito W.D."/>
            <person name="Dabelstein J."/>
            <person name="Schumacher U."/>
            <person name="Sander H."/>
            <person name="Turbide C."/>
            <person name="Bruemmer J."/>
            <person name="Meinertz T."/>
            <person name="Beauchemin N."/>
            <person name="Wagener C."/>
        </authorList>
    </citation>
    <scope>MUTAGENESIS OF TYR-488 AND SER-503</scope>
    <scope>FUNCTION</scope>
</reference>
<reference key="14">
    <citation type="journal article" date="2006" name="J. Proteome Res.">
        <title>Proteome-wide characterization of N-glycosylation events by diagonal chromatography.</title>
        <authorList>
            <person name="Ghesquiere B."/>
            <person name="Van Damme J."/>
            <person name="Martens L."/>
            <person name="Vandekerckhove J."/>
            <person name="Gevaert K."/>
        </authorList>
    </citation>
    <scope>GLYCOSYLATION [LARGE SCALE ANALYSIS] AT ASN-206</scope>
    <source>
        <strain>C57BL/6J</strain>
        <tissue>Plasma</tissue>
    </source>
</reference>
<reference key="15">
    <citation type="journal article" date="2008" name="Diabetes">
        <title>Carcinoembryonic antigen-related cell adhesion molecule 1: a link between insulin and lipid metabolism.</title>
        <authorList>
            <person name="DeAngelis A.M."/>
            <person name="Heinrich G."/>
            <person name="Dai T."/>
            <person name="Bowman T.A."/>
            <person name="Patel P.R."/>
            <person name="Lee S.J."/>
            <person name="Hong E.G."/>
            <person name="Jung D.Y."/>
            <person name="Assmann A."/>
            <person name="Kulkarni R.N."/>
            <person name="Kim J.K."/>
            <person name="Najjar S.M."/>
        </authorList>
    </citation>
    <scope>DISRUPTION PHENOTYPE</scope>
    <scope>FUNCTION</scope>
</reference>
<reference key="16">
    <citation type="journal article" date="2009" name="Blood">
        <title>CEACAM1 negatively regulates platelet-collagen interactions and thrombus growth in vitro and in vivo.</title>
        <authorList>
            <person name="Wong C."/>
            <person name="Liu Y."/>
            <person name="Yip J."/>
            <person name="Chand R."/>
            <person name="Wee J.L."/>
            <person name="Oates L."/>
            <person name="Nieswandt B."/>
            <person name="Reheman A."/>
            <person name="Ni H."/>
            <person name="Beauchemin N."/>
            <person name="Jackson D.E."/>
        </authorList>
    </citation>
    <scope>DISRUPTION PHENOTYPE</scope>
    <scope>FUNCTION</scope>
    <scope>SUBCELLULAR LOCATION</scope>
</reference>
<reference key="17">
    <citation type="journal article" date="2009" name="Nat. Biotechnol.">
        <title>Mass-spectrometric identification and relative quantification of N-linked cell surface glycoproteins.</title>
        <authorList>
            <person name="Wollscheid B."/>
            <person name="Bausch-Fluck D."/>
            <person name="Henderson C."/>
            <person name="O'Brien R."/>
            <person name="Bibel M."/>
            <person name="Schiess R."/>
            <person name="Aebersold R."/>
            <person name="Watts J.D."/>
        </authorList>
    </citation>
    <scope>GLYCOSYLATION [LARGE SCALE ANALYSIS] AT ASN-71; ASN-89; ASN-317; ASN-333 AND ASN-375</scope>
</reference>
<reference key="18">
    <citation type="journal article" date="2010" name="Cell">
        <title>A tissue-specific atlas of mouse protein phosphorylation and expression.</title>
        <authorList>
            <person name="Huttlin E.L."/>
            <person name="Jedrychowski M.P."/>
            <person name="Elias J.E."/>
            <person name="Goswami T."/>
            <person name="Rad R."/>
            <person name="Beausoleil S.A."/>
            <person name="Villen J."/>
            <person name="Haas W."/>
            <person name="Sowa M.E."/>
            <person name="Gygi S.P."/>
        </authorList>
    </citation>
    <scope>IDENTIFICATION BY MASS SPECTROMETRY [LARGE SCALE ANALYSIS]</scope>
    <source>
        <tissue>Brown adipose tissue</tissue>
        <tissue>Heart</tissue>
        <tissue>Kidney</tissue>
        <tissue>Liver</tissue>
        <tissue>Lung</tissue>
        <tissue>Pancreas</tissue>
        <tissue>Spleen</tissue>
    </source>
</reference>
<reference key="19">
    <citation type="journal article" date="2010" name="Immunity">
        <title>Carcinoembryonic antigen-related cell adhesion molecule-1 regulates granulopoiesis by inhibition of granulocyte colony-stimulating factor receptor.</title>
        <authorList>
            <person name="Pan H."/>
            <person name="Shively J.E."/>
        </authorList>
    </citation>
    <scope>TISSUE SPECIFICITY</scope>
    <scope>FUNCTION</scope>
    <scope>DISRUPTION PHENOTYPE</scope>
    <scope>PHOSPHORYLATION BY CSF3R</scope>
    <scope>INTERACTION WITH CSF3R</scope>
</reference>
<reference key="20">
    <citation type="journal article" date="2010" name="J. Cell Sci.">
        <title>CEACAM1: a key regulator of vascular permeability.</title>
        <authorList>
            <person name="Nouvion A.L."/>
            <person name="Oubaha M."/>
            <person name="Leblanc S."/>
            <person name="Davis E.C."/>
            <person name="Jastrow H."/>
            <person name="Kammerer R."/>
            <person name="Breton V."/>
            <person name="Turbide C."/>
            <person name="Ergun S."/>
            <person name="Gratton J.P."/>
            <person name="Beauchemin N."/>
        </authorList>
    </citation>
    <scope>FUNCTION</scope>
    <scope>DISRUPTION PHENOTYPE</scope>
    <scope>MUTAGENESIS OF TYR-488 AND TYR-515</scope>
    <scope>PHOSPHORYLATION AT TYR-488 AND TYR-515</scope>
</reference>
<reference key="21">
    <citation type="journal article" date="2012" name="Arterioscler. Thromb. Vasc. Biol.">
        <title>Acceleration of collateral development by carcinoembryonic antigen-related cell adhesion molecule 1 expression on CD11b/[?]Gr-1[?] myeloid cells--brief report.</title>
        <authorList>
            <person name="Bickert T."/>
            <person name="Marshall R.P."/>
            <person name="Zhang Z."/>
            <person name="Ludewig P."/>
            <person name="Binder M."/>
            <person name="Klinke A."/>
            <person name="Rottbauer W."/>
            <person name="Amling M."/>
            <person name="Wagener C."/>
            <person name="Ito W.D."/>
            <person name="Horst A.K."/>
        </authorList>
    </citation>
    <scope>FUNCTION</scope>
</reference>
<reference key="22">
    <citation type="journal article" date="2012" name="Immunity">
        <title>The short isoform of the CEACAM1 receptor in intestinal T cells regulates mucosal immunity and homeostasis via Tfh cell induction.</title>
        <authorList>
            <person name="Chen L."/>
            <person name="Chen Z."/>
            <person name="Baker K."/>
            <person name="Halvorsen E.M."/>
            <person name="da Cunha A.P."/>
            <person name="Flak M.B."/>
            <person name="Gerber G."/>
            <person name="Huang Y.H."/>
            <person name="Hosomi S."/>
            <person name="Arthur J.C."/>
            <person name="Dery K.J."/>
            <person name="Nagaishi T."/>
            <person name="Beauchemin N."/>
            <person name="Holmes K.V."/>
            <person name="Ho J.W."/>
            <person name="Shively J.E."/>
            <person name="Jobin C."/>
            <person name="Onderdonk A.B."/>
            <person name="Bry L."/>
            <person name="Weiner H.L."/>
            <person name="Higgins D.E."/>
            <person name="Blumberg R.S."/>
        </authorList>
    </citation>
    <scope>TISSUE SPECIFICITY</scope>
    <scope>FUNCTION</scope>
    <scope>INDUCTION</scope>
</reference>
<reference key="23">
    <citation type="journal article" date="2012" name="PLoS Pathog.">
        <title>CEACAM1 negatively regulates IL-1beta production in LPS activated neutrophils by recruiting SHP-1 to a SYK-TLR4-CEACAM1 complex.</title>
        <authorList>
            <person name="Lu R."/>
            <person name="Pan H."/>
            <person name="Shively J.E."/>
        </authorList>
    </citation>
    <scope>FUNCTION</scope>
    <scope>INTERACTION WITH SYK</scope>
    <scope>PTPN6; TLR4 AND LYN</scope>
    <scope>MUTAGENESIS OF TYR-488 AND TYR-515</scope>
</reference>
<reference key="24">
    <citation type="journal article" date="2013" name="Eur. J. Immunol.">
        <title>CEACAM1 on activated NK cells inhibits NKG2D-mediated cytolytic function and signaling.</title>
        <authorList>
            <person name="Hosomi S."/>
            <person name="Chen Z."/>
            <person name="Baker K."/>
            <person name="Chen L."/>
            <person name="Huang Y.H."/>
            <person name="Olszak T."/>
            <person name="Zeissig S."/>
            <person name="Wang J.H."/>
            <person name="Mandelboim O."/>
            <person name="Beauchemin N."/>
            <person name="Lanier L.L."/>
            <person name="Blumberg R.S."/>
        </authorList>
    </citation>
    <scope>FUNCTION</scope>
    <scope>INDUCTION</scope>
</reference>
<reference key="25">
    <citation type="journal article" date="2014" name="PLoS ONE">
        <title>Increased osteoclastogenesis in mice lacking the carcinoembryonic antigen-related cell adhesion molecule 1.</title>
        <authorList>
            <person name="Heckt T."/>
            <person name="Bickert T."/>
            <person name="Jeschke A."/>
            <person name="Seitz S."/>
            <person name="Schulze J."/>
            <person name="Ito W.D."/>
            <person name="Zimmermann W."/>
            <person name="Amling M."/>
            <person name="Schinke T."/>
            <person name="Horst A.K."/>
            <person name="Keller J."/>
        </authorList>
    </citation>
    <scope>TISSUE SPECIFICITY</scope>
    <scope>DEVELOPMENTAL STAGE</scope>
    <scope>DISRUPTION PHENOTYPE</scope>
    <scope>FUNCTION</scope>
</reference>
<reference key="26">
    <citation type="journal article" date="2015" name="Genes Cells">
        <title>Regulation by gut commensal bacteria of carcinoembryonic antigen-related cell adhesion molecule expression in the intestinal epithelium.</title>
        <authorList>
            <person name="Kitamura Y."/>
            <person name="Murata Y."/>
            <person name="Park J.H."/>
            <person name="Kotani T."/>
            <person name="Imada S."/>
            <person name="Saito Y."/>
            <person name="Okazawa H."/>
            <person name="Azuma T."/>
            <person name="Matozaki T."/>
        </authorList>
    </citation>
    <scope>SUBCELLULAR LOCATION</scope>
    <scope>TISSUE SPECIFICITY</scope>
    <scope>INDUCTION</scope>
</reference>
<reference key="27">
    <citation type="journal article" date="2015" name="Nature">
        <title>CEACAM1 regulates TIM-3-mediated tolerance and exhaustion.</title>
        <authorList>
            <person name="Huang Y.H."/>
            <person name="Zhu C."/>
            <person name="Kondo Y."/>
            <person name="Anderson A.C."/>
            <person name="Gandhi A."/>
            <person name="Russell A."/>
            <person name="Dougan S.K."/>
            <person name="Petersen B.S."/>
            <person name="Melum E."/>
            <person name="Pertel T."/>
            <person name="Clayton K.L."/>
            <person name="Raab M."/>
            <person name="Chen Q."/>
            <person name="Beauchemin N."/>
            <person name="Yazaki P.J."/>
            <person name="Pyzik M."/>
            <person name="Ostrowski M.A."/>
            <person name="Glickman J.N."/>
            <person name="Rudd C.E."/>
            <person name="Ploegh H.L."/>
            <person name="Franke A."/>
            <person name="Petsko G.A."/>
            <person name="Kuchroo V.K."/>
            <person name="Blumberg R.S."/>
        </authorList>
    </citation>
    <scope>INTERACTION WITH HAVCR2</scope>
</reference>
<reference key="28">
    <citation type="journal article" date="2002" name="EMBO J.">
        <title>Crystal structure of murine sCEACAM1a[1,4]: a coronavirus receptor in the CEA family.</title>
        <authorList>
            <person name="Tan K."/>
            <person name="Zelus B.D."/>
            <person name="Meijers R."/>
            <person name="Liu J.-H."/>
            <person name="Bergelson J.M."/>
            <person name="Duke N."/>
            <person name="Zhang R."/>
            <person name="Joachimiak A."/>
            <person name="Holmes K.V."/>
            <person name="Wang J.-H."/>
        </authorList>
    </citation>
    <scope>X-RAY CRYSTALLOGRAPHY (3.32 ANGSTROMS) OF 35-236 (ISOFORM 3)</scope>
    <scope>GLYCOSYLATION AT ASN-71; ASN-89; ASN-104 AND ASN-333</scope>
    <scope>DISULFIDE BOND</scope>
    <scope>INTERACTION WITH MURINE CORONAVIRUS MHV S1 SPIKE GLYCOPROTEIN (MICROBIAL INFECTION)</scope>
</reference>
<gene>
    <name evidence="38" type="primary">Ceacam1</name>
    <name evidence="35" type="synonym">Bgp</name>
    <name type="synonym">Bgp1</name>
</gene>